<organism>
    <name type="scientific">Malassezia globosa (strain ATCC MYA-4612 / CBS 7966)</name>
    <name type="common">Dandruff-associated fungus</name>
    <dbReference type="NCBI Taxonomy" id="425265"/>
    <lineage>
        <taxon>Eukaryota</taxon>
        <taxon>Fungi</taxon>
        <taxon>Dikarya</taxon>
        <taxon>Basidiomycota</taxon>
        <taxon>Ustilaginomycotina</taxon>
        <taxon>Malasseziomycetes</taxon>
        <taxon>Malasseziales</taxon>
        <taxon>Malasseziaceae</taxon>
        <taxon>Malassezia</taxon>
    </lineage>
</organism>
<keyword id="KW-0134">Cell wall</keyword>
<keyword id="KW-1015">Disulfide bond</keyword>
<keyword id="KW-0325">Glycoprotein</keyword>
<keyword id="KW-0378">Hydrolase</keyword>
<keyword id="KW-0442">Lipid degradation</keyword>
<keyword id="KW-0443">Lipid metabolism</keyword>
<keyword id="KW-1185">Reference proteome</keyword>
<keyword id="KW-0964">Secreted</keyword>
<keyword id="KW-0732">Signal</keyword>
<keyword id="KW-0843">Virulence</keyword>
<accession>A8QDF0</accession>
<protein>
    <recommendedName>
        <fullName evidence="6">Secreted triacylglycerol lipase LIP3</fullName>
        <ecNumber evidence="5">3.1.1.-</ecNumber>
        <ecNumber evidence="5">3.1.1.3</ecNumber>
    </recommendedName>
</protein>
<name>LIP3_MALGO</name>
<reference key="1">
    <citation type="journal article" date="2007" name="Proc. Natl. Acad. Sci. U.S.A.">
        <title>Dandruff-associated Malassezia genomes reveal convergent and divergent virulence traits shared with plant and human fungal pathogens.</title>
        <authorList>
            <person name="Xu J."/>
            <person name="Saunders C.W."/>
            <person name="Hu P."/>
            <person name="Grant R.A."/>
            <person name="Boekhout T."/>
            <person name="Kuramae E.E."/>
            <person name="Kronstad J.W."/>
            <person name="DeAngelis Y.M."/>
            <person name="Reeder N.L."/>
            <person name="Johnstone K.R."/>
            <person name="Leland M."/>
            <person name="Fieno A.M."/>
            <person name="Begley W.M."/>
            <person name="Sun Y."/>
            <person name="Lacey M.P."/>
            <person name="Chaudhary T."/>
            <person name="Keough T."/>
            <person name="Chu L."/>
            <person name="Sears R."/>
            <person name="Yuan B."/>
            <person name="Dawson T.L. Jr."/>
        </authorList>
    </citation>
    <scope>NUCLEOTIDE SEQUENCE [LARGE SCALE GENOMIC DNA]</scope>
    <scope>IDENTIFICATION</scope>
    <scope>FUNCTION</scope>
    <scope>SUBCELLULAR LOCATION</scope>
    <source>
        <strain>ATCC MYA-4612 / CBS 7966</strain>
    </source>
</reference>
<reference key="2">
    <citation type="journal article" date="2016" name="Microbiology">
        <title>Secreted lipases from Malassezia globosa: recombinant expression and determination of their substrate specificities.</title>
        <authorList>
            <person name="Sommer B."/>
            <person name="Overy D.P."/>
            <person name="Haltli B."/>
            <person name="Kerr R.G."/>
        </authorList>
    </citation>
    <scope>FUNCTION</scope>
    <scope>CATALYTIC ACTIVITY</scope>
    <scope>SUBSTRATE SPECIFICITY</scope>
</reference>
<sequence>MKLGIVAFTLISFAAQALALVARENLPKPQNDPFYQPPDGWESKKVGTILRSRKVNINTLVKDNLKEAWQLLYRTTYRSDDEPTTTVTTIMVPHNAQNDSLVLYADFEDAGAPQCAPSYTWRAGLLSDTSSIFNVGIAMLYLQEGYIVTMPDKEGNKGAFGSGHVEGRQSLDGIRATLAFDKIGLNKNARVVGHGYSGGGIQCGWTAALKKSYAPEINSVGWFTGGTPSNVTALVEKINGGPFAGYVAGGLGGVISTYPDVKAYTDKVFTKQAQKDLEFPRKHCQEEITLHFLFKNFYDKSFSTVGKRFLYEPVVQKALNELTMGTNPDFTPDTPVLMAHGVSDEVAPYEAAHETYKSWCKNGADVEFVSFANPVSAHGVTTVTSTVPGFLWNRDRLQGKPVQGGCREIKNYDVGVNSHALGEDFESALGLLKGLLGDKIGPNDEYLKDALHK</sequence>
<proteinExistence type="evidence at protein level"/>
<gene>
    <name evidence="6" type="primary">LIP3</name>
    <name type="ORF">MGL_4197</name>
</gene>
<dbReference type="EC" id="3.1.1.-" evidence="5"/>
<dbReference type="EC" id="3.1.1.3" evidence="5"/>
<dbReference type="EMBL" id="AAYY01000021">
    <property type="protein sequence ID" value="EDP41504.1"/>
    <property type="molecule type" value="Genomic_DNA"/>
</dbReference>
<dbReference type="RefSeq" id="XP_001728718.1">
    <property type="nucleotide sequence ID" value="XM_001728666.1"/>
</dbReference>
<dbReference type="SMR" id="A8QDF0"/>
<dbReference type="ESTHER" id="malgo-a8qdf0">
    <property type="family name" value="Fungal-Bact_LIP"/>
</dbReference>
<dbReference type="GeneID" id="5853009"/>
<dbReference type="KEGG" id="mgl:MGL_4197"/>
<dbReference type="VEuPathDB" id="FungiDB:MGL_4197"/>
<dbReference type="InParanoid" id="A8QDF0"/>
<dbReference type="OrthoDB" id="2373480at2759"/>
<dbReference type="BRENDA" id="3.1.1.79">
    <property type="organism ID" value="13511"/>
</dbReference>
<dbReference type="Proteomes" id="UP000008837">
    <property type="component" value="Unassembled WGS sequence"/>
</dbReference>
<dbReference type="GO" id="GO:0005576">
    <property type="term" value="C:extracellular region"/>
    <property type="evidence" value="ECO:0007669"/>
    <property type="project" value="UniProtKB-SubCell"/>
</dbReference>
<dbReference type="GO" id="GO:0004806">
    <property type="term" value="F:triacylglycerol lipase activity"/>
    <property type="evidence" value="ECO:0007669"/>
    <property type="project" value="InterPro"/>
</dbReference>
<dbReference type="GO" id="GO:0016042">
    <property type="term" value="P:lipid catabolic process"/>
    <property type="evidence" value="ECO:0007669"/>
    <property type="project" value="UniProtKB-KW"/>
</dbReference>
<dbReference type="Gene3D" id="1.10.260.130">
    <property type="match status" value="1"/>
</dbReference>
<dbReference type="Gene3D" id="3.40.50.1820">
    <property type="entry name" value="alpha/beta hydrolase"/>
    <property type="match status" value="1"/>
</dbReference>
<dbReference type="InterPro" id="IPR029058">
    <property type="entry name" value="AB_hydrolase_fold"/>
</dbReference>
<dbReference type="InterPro" id="IPR005152">
    <property type="entry name" value="Lipase_secreted"/>
</dbReference>
<dbReference type="PANTHER" id="PTHR34853">
    <property type="match status" value="1"/>
</dbReference>
<dbReference type="PANTHER" id="PTHR34853:SF1">
    <property type="entry name" value="LIPASE 5"/>
    <property type="match status" value="1"/>
</dbReference>
<dbReference type="Pfam" id="PF03583">
    <property type="entry name" value="LIP"/>
    <property type="match status" value="1"/>
</dbReference>
<dbReference type="PIRSF" id="PIRSF029171">
    <property type="entry name" value="Esterase_LipA"/>
    <property type="match status" value="1"/>
</dbReference>
<dbReference type="SUPFAM" id="SSF53474">
    <property type="entry name" value="alpha/beta-Hydrolases"/>
    <property type="match status" value="1"/>
</dbReference>
<feature type="signal peptide" evidence="2">
    <location>
        <begin position="1"/>
        <end position="19"/>
    </location>
</feature>
<feature type="chain" id="PRO_5013435430" description="Secreted triacylglycerol lipase LIP3">
    <location>
        <begin position="20"/>
        <end position="453"/>
    </location>
</feature>
<feature type="active site" description="Nucleophile" evidence="8">
    <location>
        <position position="197"/>
    </location>
</feature>
<feature type="active site" evidence="8">
    <location>
        <position position="344"/>
    </location>
</feature>
<feature type="active site" evidence="8">
    <location>
        <position position="378"/>
    </location>
</feature>
<feature type="glycosylation site" description="N-linked (GlcNAc...) asparagine" evidence="3">
    <location>
        <position position="98"/>
    </location>
</feature>
<feature type="glycosylation site" description="N-linked (GlcNAc...) asparagine" evidence="3">
    <location>
        <position position="230"/>
    </location>
</feature>
<feature type="disulfide bond" evidence="1">
    <location>
        <begin position="115"/>
        <end position="284"/>
    </location>
</feature>
<feature type="disulfide bond" evidence="1">
    <location>
        <begin position="360"/>
        <end position="406"/>
    </location>
</feature>
<comment type="function">
    <text evidence="4 5">Secreted lipase involved in Dandruff and seborrheic dermatitis (D/SD) probably via lipase-mediated breakdown of sebaceous lipids and release of irritating free fatty acids (PubMed:18000048). Has triacylglycerol lipase activity and is able to hydrolyze triolein, tristearin, trilinolein, tripalmitoylglycerol and trihexadecenoin (PubMed:27130210). Hydrolyzes diacylglycerols such as distearin, dilinolein, dipalmitoylglycerol and dipalmitolein (PubMed:27130210). Mostly converts monoolein to di- and triolein, while free fatty acids are only produced in low amounts (PubMed:27130210).</text>
</comment>
<comment type="catalytic activity">
    <reaction evidence="5">
        <text>a triacylglycerol + H2O = a diacylglycerol + a fatty acid + H(+)</text>
        <dbReference type="Rhea" id="RHEA:12044"/>
        <dbReference type="ChEBI" id="CHEBI:15377"/>
        <dbReference type="ChEBI" id="CHEBI:15378"/>
        <dbReference type="ChEBI" id="CHEBI:17855"/>
        <dbReference type="ChEBI" id="CHEBI:18035"/>
        <dbReference type="ChEBI" id="CHEBI:28868"/>
        <dbReference type="EC" id="3.1.1.3"/>
    </reaction>
</comment>
<comment type="catalytic activity">
    <reaction evidence="5">
        <text>a monoacylglycerol + H2O = glycerol + a fatty acid + H(+)</text>
        <dbReference type="Rhea" id="RHEA:15245"/>
        <dbReference type="ChEBI" id="CHEBI:15377"/>
        <dbReference type="ChEBI" id="CHEBI:15378"/>
        <dbReference type="ChEBI" id="CHEBI:17408"/>
        <dbReference type="ChEBI" id="CHEBI:17754"/>
        <dbReference type="ChEBI" id="CHEBI:28868"/>
    </reaction>
</comment>
<comment type="catalytic activity">
    <reaction evidence="5">
        <text>a diacylglycerol + H2O = a monoacylglycerol + a fatty acid + H(+)</text>
        <dbReference type="Rhea" id="RHEA:32731"/>
        <dbReference type="ChEBI" id="CHEBI:15377"/>
        <dbReference type="ChEBI" id="CHEBI:15378"/>
        <dbReference type="ChEBI" id="CHEBI:17408"/>
        <dbReference type="ChEBI" id="CHEBI:18035"/>
        <dbReference type="ChEBI" id="CHEBI:28868"/>
    </reaction>
</comment>
<comment type="subcellular location">
    <subcellularLocation>
        <location evidence="4">Secreted</location>
    </subcellularLocation>
    <subcellularLocation>
        <location evidence="4">Secreted</location>
        <location evidence="4">Cell wall</location>
    </subcellularLocation>
</comment>
<comment type="similarity">
    <text evidence="7">Belongs to the AB hydrolase superfamily. Lipase family. Class Lip subfamily.</text>
</comment>
<evidence type="ECO:0000250" key="1">
    <source>
        <dbReference type="UniProtKB" id="W3VKA4"/>
    </source>
</evidence>
<evidence type="ECO:0000255" key="2"/>
<evidence type="ECO:0000255" key="3">
    <source>
        <dbReference type="PROSITE-ProRule" id="PRU00498"/>
    </source>
</evidence>
<evidence type="ECO:0000269" key="4">
    <source>
    </source>
</evidence>
<evidence type="ECO:0000269" key="5">
    <source>
    </source>
</evidence>
<evidence type="ECO:0000303" key="6">
    <source>
    </source>
</evidence>
<evidence type="ECO:0000305" key="7"/>
<evidence type="ECO:0000305" key="8">
    <source>
    </source>
</evidence>